<protein>
    <recommendedName>
        <fullName>Ferrous iron permease EfeU</fullName>
    </recommendedName>
    <alternativeName>
        <fullName>Fe(2+) ion permease EfeU</fullName>
    </alternativeName>
    <alternativeName>
        <fullName>Ferrous iron uptake protein</fullName>
    </alternativeName>
</protein>
<sequence length="276" mass="30387">MFVPFLIILREGLEAALIVSLIASYLTRTQRGRWIGVMWIGVLLAAALCLGLGIFINETTGEFPQKEQELFEGIVAVIAVVILTWMVFWMRKVSRNVKVQLEQAVDSALQRGNHHGWALVMMVFFAVAREGLESVFFLLAAFQQDVGIWPPLGAMLGLATAVVLGFLLYWGGIRLNLGAFFKWTSLFILFVAAGLAAGAIRAFHEAGLWNHFQEIAFDMSAVLSTHSLFGTLMEGIFGYQEAPSVSEVAVWFIYLIPALVAFVLPPRAGATASRSM</sequence>
<feature type="chain" id="PRO_0000275154" description="Ferrous iron permease EfeU">
    <location>
        <begin position="1"/>
        <end position="276"/>
    </location>
</feature>
<feature type="topological domain" description="Periplasmic" evidence="2">
    <location>
        <position position="1"/>
    </location>
</feature>
<feature type="transmembrane region" description="Helical" evidence="2">
    <location>
        <begin position="2"/>
        <end position="22"/>
    </location>
</feature>
<feature type="topological domain" description="Cytoplasmic" evidence="2">
    <location>
        <begin position="23"/>
        <end position="34"/>
    </location>
</feature>
<feature type="transmembrane region" description="Helical" evidence="2">
    <location>
        <begin position="35"/>
        <end position="55"/>
    </location>
</feature>
<feature type="topological domain" description="Periplasmic" evidence="2">
    <location>
        <begin position="56"/>
        <end position="69"/>
    </location>
</feature>
<feature type="transmembrane region" description="Helical" evidence="2">
    <location>
        <begin position="70"/>
        <end position="90"/>
    </location>
</feature>
<feature type="topological domain" description="Cytoplasmic" evidence="2">
    <location>
        <begin position="91"/>
        <end position="118"/>
    </location>
</feature>
<feature type="transmembrane region" description="Helical" evidence="2">
    <location>
        <begin position="119"/>
        <end position="139"/>
    </location>
</feature>
<feature type="topological domain" description="Periplasmic" evidence="2">
    <location>
        <begin position="140"/>
        <end position="147"/>
    </location>
</feature>
<feature type="transmembrane region" description="Helical" evidence="2">
    <location>
        <begin position="148"/>
        <end position="168"/>
    </location>
</feature>
<feature type="topological domain" description="Cytoplasmic" evidence="2">
    <location>
        <begin position="169"/>
        <end position="179"/>
    </location>
</feature>
<feature type="transmembrane region" description="Helical" evidence="2">
    <location>
        <begin position="180"/>
        <end position="200"/>
    </location>
</feature>
<feature type="topological domain" description="Periplasmic" evidence="2">
    <location>
        <begin position="201"/>
        <end position="244"/>
    </location>
</feature>
<feature type="transmembrane region" description="Helical" evidence="2">
    <location>
        <begin position="245"/>
        <end position="265"/>
    </location>
</feature>
<feature type="topological domain" description="Cytoplasmic" evidence="2">
    <location>
        <begin position="266"/>
        <end position="276"/>
    </location>
</feature>
<feature type="mutagenesis site" description="Loss of activity in vivo." evidence="3">
    <original>E</original>
    <variation>A</variation>
    <location>
        <position position="11"/>
    </location>
</feature>
<feature type="mutagenesis site" description="Loss of activity in vivo." evidence="3">
    <original>E</original>
    <variation>A</variation>
    <location>
        <position position="130"/>
    </location>
</feature>
<proteinExistence type="evidence at protein level"/>
<gene>
    <name type="primary">efeU</name>
    <name type="ordered locus">c1155</name>
</gene>
<evidence type="ECO:0000250" key="1"/>
<evidence type="ECO:0000255" key="2"/>
<evidence type="ECO:0000269" key="3">
    <source>
    </source>
</evidence>
<evidence type="ECO:0000305" key="4"/>
<comment type="function">
    <text evidence="3">Uptake of Fe(2+) ions across the membrane.</text>
</comment>
<comment type="subunit">
    <text evidence="1">Part of a ferrous iron transporter composed of EfeU, EfeO and EfeB.</text>
</comment>
<comment type="subcellular location">
    <subcellularLocation>
        <location>Cell inner membrane</location>
        <topology>Multi-pass membrane protein</topology>
    </subcellularLocation>
</comment>
<comment type="induction">
    <text evidence="3">Expressed in response to iron deprivation at pH 7.</text>
</comment>
<comment type="similarity">
    <text evidence="4">Belongs to the oxidase-dependent Fe transporter (OFeT) (TC 9.A.10.1) family.</text>
</comment>
<comment type="sequence caution" evidence="4">
    <conflict type="frameshift">
        <sequence resource="EMBL-CDS" id="AAN79623"/>
    </conflict>
</comment>
<name>EFEU_ECOL6</name>
<dbReference type="EMBL" id="AE014075">
    <property type="protein sequence ID" value="AAN79623.1"/>
    <property type="status" value="ALT_FRAME"/>
    <property type="molecule type" value="Genomic_DNA"/>
</dbReference>
<dbReference type="STRING" id="199310.c1155"/>
<dbReference type="KEGG" id="ecc:c1155"/>
<dbReference type="eggNOG" id="COG0672">
    <property type="taxonomic scope" value="Bacteria"/>
</dbReference>
<dbReference type="HOGENOM" id="CLU_077905_0_0_6"/>
<dbReference type="Proteomes" id="UP000001410">
    <property type="component" value="Chromosome"/>
</dbReference>
<dbReference type="GO" id="GO:0033573">
    <property type="term" value="C:high-affinity iron permease complex"/>
    <property type="evidence" value="ECO:0007669"/>
    <property type="project" value="InterPro"/>
</dbReference>
<dbReference type="GO" id="GO:0015093">
    <property type="term" value="F:ferrous iron transmembrane transporter activity"/>
    <property type="evidence" value="ECO:0007669"/>
    <property type="project" value="TreeGrafter"/>
</dbReference>
<dbReference type="InterPro" id="IPR005217">
    <property type="entry name" value="EfeU/FTR1-like"/>
</dbReference>
<dbReference type="InterPro" id="IPR004923">
    <property type="entry name" value="FTR1/Fip1/EfeU"/>
</dbReference>
<dbReference type="InterPro" id="IPR036259">
    <property type="entry name" value="MFS_trans_sf"/>
</dbReference>
<dbReference type="NCBIfam" id="NF041756">
    <property type="entry name" value="EfeU"/>
    <property type="match status" value="1"/>
</dbReference>
<dbReference type="NCBIfam" id="TIGR00145">
    <property type="entry name" value="EfeU/Ftr1 family ferrous iron transporter subunit"/>
    <property type="match status" value="1"/>
</dbReference>
<dbReference type="PANTHER" id="PTHR31632">
    <property type="entry name" value="IRON TRANSPORTER FTH1"/>
    <property type="match status" value="1"/>
</dbReference>
<dbReference type="PANTHER" id="PTHR31632:SF2">
    <property type="entry name" value="PLASMA MEMBRANE IRON PERMEASE"/>
    <property type="match status" value="1"/>
</dbReference>
<dbReference type="Pfam" id="PF03239">
    <property type="entry name" value="FTR1"/>
    <property type="match status" value="1"/>
</dbReference>
<dbReference type="SUPFAM" id="SSF103473">
    <property type="entry name" value="MFS general substrate transporter"/>
    <property type="match status" value="1"/>
</dbReference>
<organism>
    <name type="scientific">Escherichia coli O6:H1 (strain CFT073 / ATCC 700928 / UPEC)</name>
    <dbReference type="NCBI Taxonomy" id="199310"/>
    <lineage>
        <taxon>Bacteria</taxon>
        <taxon>Pseudomonadati</taxon>
        <taxon>Pseudomonadota</taxon>
        <taxon>Gammaproteobacteria</taxon>
        <taxon>Enterobacterales</taxon>
        <taxon>Enterobacteriaceae</taxon>
        <taxon>Escherichia</taxon>
    </lineage>
</organism>
<accession>Q8FJ36</accession>
<reference key="1">
    <citation type="journal article" date="2002" name="Proc. Natl. Acad. Sci. U.S.A.">
        <title>Extensive mosaic structure revealed by the complete genome sequence of uropathogenic Escherichia coli.</title>
        <authorList>
            <person name="Welch R.A."/>
            <person name="Burland V."/>
            <person name="Plunkett G. III"/>
            <person name="Redford P."/>
            <person name="Roesch P."/>
            <person name="Rasko D."/>
            <person name="Buckles E.L."/>
            <person name="Liou S.-R."/>
            <person name="Boutin A."/>
            <person name="Hackett J."/>
            <person name="Stroud D."/>
            <person name="Mayhew G.F."/>
            <person name="Rose D.J."/>
            <person name="Zhou S."/>
            <person name="Schwartz D.C."/>
            <person name="Perna N.T."/>
            <person name="Mobley H.L.T."/>
            <person name="Donnenberg M.S."/>
            <person name="Blattner F.R."/>
        </authorList>
    </citation>
    <scope>NUCLEOTIDE SEQUENCE [LARGE SCALE GENOMIC DNA]</scope>
    <source>
        <strain>CFT073 / ATCC 700928 / UPEC</strain>
    </source>
</reference>
<reference key="2">
    <citation type="journal article" date="2006" name="Mol. Microbiol.">
        <title>A new ferrous iron-uptake transporter, EfeU (YcdN), from Escherichia coli.</title>
        <authorList>
            <person name="Grosse C."/>
            <person name="Scherer J."/>
            <person name="Koch D."/>
            <person name="Otto M."/>
            <person name="Taudte N."/>
            <person name="Grass G."/>
        </authorList>
    </citation>
    <scope>FUNCTION</scope>
    <scope>MUTAGENESIS OF GLU-11 AND GLU-130</scope>
    <scope>INDUCTION</scope>
    <scope>TOPOLOGY</scope>
    <source>
        <strain>O6:K5:H1 / Nissle 1917</strain>
    </source>
</reference>
<keyword id="KW-0997">Cell inner membrane</keyword>
<keyword id="KW-1003">Cell membrane</keyword>
<keyword id="KW-0406">Ion transport</keyword>
<keyword id="KW-0408">Iron</keyword>
<keyword id="KW-0410">Iron transport</keyword>
<keyword id="KW-0472">Membrane</keyword>
<keyword id="KW-1185">Reference proteome</keyword>
<keyword id="KW-0812">Transmembrane</keyword>
<keyword id="KW-1133">Transmembrane helix</keyword>
<keyword id="KW-0813">Transport</keyword>